<proteinExistence type="inferred from homology"/>
<comment type="function">
    <text evidence="1">One of the primary rRNA binding proteins, it binds directly to 16S rRNA where it helps nucleate assembly of the platform of the 30S subunit by binding and bridging several RNA helices of the 16S rRNA.</text>
</comment>
<comment type="function">
    <text evidence="1">Forms an intersubunit bridge (bridge B4) with the 23S rRNA of the 50S subunit in the ribosome.</text>
</comment>
<comment type="subunit">
    <text evidence="1">Part of the 30S ribosomal subunit. Forms a bridge to the 50S subunit in the 70S ribosome, contacting the 23S rRNA.</text>
</comment>
<comment type="similarity">
    <text evidence="1">Belongs to the universal ribosomal protein uS15 family.</text>
</comment>
<comment type="sequence caution" evidence="2">
    <conflict type="erroneous initiation">
        <sequence resource="EMBL-CDS" id="ABB28714"/>
    </conflict>
</comment>
<organism>
    <name type="scientific">Chlorobium chlorochromatii (strain CaD3)</name>
    <dbReference type="NCBI Taxonomy" id="340177"/>
    <lineage>
        <taxon>Bacteria</taxon>
        <taxon>Pseudomonadati</taxon>
        <taxon>Chlorobiota</taxon>
        <taxon>Chlorobiia</taxon>
        <taxon>Chlorobiales</taxon>
        <taxon>Chlorobiaceae</taxon>
        <taxon>Chlorobium/Pelodictyon group</taxon>
        <taxon>Chlorobium</taxon>
    </lineage>
</organism>
<protein>
    <recommendedName>
        <fullName evidence="1">Small ribosomal subunit protein uS15</fullName>
    </recommendedName>
    <alternativeName>
        <fullName evidence="2">30S ribosomal protein S15</fullName>
    </alternativeName>
</protein>
<feature type="chain" id="PRO_0000255487" description="Small ribosomal subunit protein uS15">
    <location>
        <begin position="1"/>
        <end position="89"/>
    </location>
</feature>
<keyword id="KW-0687">Ribonucleoprotein</keyword>
<keyword id="KW-0689">Ribosomal protein</keyword>
<keyword id="KW-0694">RNA-binding</keyword>
<keyword id="KW-0699">rRNA-binding</keyword>
<dbReference type="EMBL" id="CP000108">
    <property type="protein sequence ID" value="ABB28714.1"/>
    <property type="status" value="ALT_INIT"/>
    <property type="molecule type" value="Genomic_DNA"/>
</dbReference>
<dbReference type="SMR" id="Q3AQL1"/>
<dbReference type="STRING" id="340177.Cag_1458"/>
<dbReference type="KEGG" id="cch:Cag_1458"/>
<dbReference type="eggNOG" id="COG0184">
    <property type="taxonomic scope" value="Bacteria"/>
</dbReference>
<dbReference type="HOGENOM" id="CLU_148518_0_0_10"/>
<dbReference type="OrthoDB" id="9799262at2"/>
<dbReference type="GO" id="GO:0022627">
    <property type="term" value="C:cytosolic small ribosomal subunit"/>
    <property type="evidence" value="ECO:0007669"/>
    <property type="project" value="TreeGrafter"/>
</dbReference>
<dbReference type="GO" id="GO:0019843">
    <property type="term" value="F:rRNA binding"/>
    <property type="evidence" value="ECO:0007669"/>
    <property type="project" value="UniProtKB-UniRule"/>
</dbReference>
<dbReference type="GO" id="GO:0003735">
    <property type="term" value="F:structural constituent of ribosome"/>
    <property type="evidence" value="ECO:0007669"/>
    <property type="project" value="InterPro"/>
</dbReference>
<dbReference type="GO" id="GO:0006412">
    <property type="term" value="P:translation"/>
    <property type="evidence" value="ECO:0007669"/>
    <property type="project" value="UniProtKB-UniRule"/>
</dbReference>
<dbReference type="CDD" id="cd00353">
    <property type="entry name" value="Ribosomal_S15p_S13e"/>
    <property type="match status" value="1"/>
</dbReference>
<dbReference type="FunFam" id="1.10.287.10:FF:000002">
    <property type="entry name" value="30S ribosomal protein S15"/>
    <property type="match status" value="1"/>
</dbReference>
<dbReference type="Gene3D" id="6.10.250.3130">
    <property type="match status" value="1"/>
</dbReference>
<dbReference type="Gene3D" id="1.10.287.10">
    <property type="entry name" value="S15/NS1, RNA-binding"/>
    <property type="match status" value="1"/>
</dbReference>
<dbReference type="HAMAP" id="MF_01343_B">
    <property type="entry name" value="Ribosomal_uS15_B"/>
    <property type="match status" value="1"/>
</dbReference>
<dbReference type="InterPro" id="IPR000589">
    <property type="entry name" value="Ribosomal_uS15"/>
</dbReference>
<dbReference type="InterPro" id="IPR005290">
    <property type="entry name" value="Ribosomal_uS15_bac-type"/>
</dbReference>
<dbReference type="InterPro" id="IPR009068">
    <property type="entry name" value="uS15_NS1_RNA-bd_sf"/>
</dbReference>
<dbReference type="NCBIfam" id="TIGR00952">
    <property type="entry name" value="S15_bact"/>
    <property type="match status" value="1"/>
</dbReference>
<dbReference type="PANTHER" id="PTHR23321">
    <property type="entry name" value="RIBOSOMAL PROTEIN S15, BACTERIAL AND ORGANELLAR"/>
    <property type="match status" value="1"/>
</dbReference>
<dbReference type="PANTHER" id="PTHR23321:SF26">
    <property type="entry name" value="SMALL RIBOSOMAL SUBUNIT PROTEIN US15M"/>
    <property type="match status" value="1"/>
</dbReference>
<dbReference type="Pfam" id="PF00312">
    <property type="entry name" value="Ribosomal_S15"/>
    <property type="match status" value="1"/>
</dbReference>
<dbReference type="SMART" id="SM01387">
    <property type="entry name" value="Ribosomal_S15"/>
    <property type="match status" value="1"/>
</dbReference>
<dbReference type="SUPFAM" id="SSF47060">
    <property type="entry name" value="S15/NS1 RNA-binding domain"/>
    <property type="match status" value="1"/>
</dbReference>
<dbReference type="PROSITE" id="PS00362">
    <property type="entry name" value="RIBOSOMAL_S15"/>
    <property type="match status" value="1"/>
</dbReference>
<evidence type="ECO:0000255" key="1">
    <source>
        <dbReference type="HAMAP-Rule" id="MF_01343"/>
    </source>
</evidence>
<evidence type="ECO:0000305" key="2"/>
<reference key="1">
    <citation type="submission" date="2005-08" db="EMBL/GenBank/DDBJ databases">
        <title>Complete sequence of Chlorobium chlorochromatii CaD3.</title>
        <authorList>
            <consortium name="US DOE Joint Genome Institute"/>
            <person name="Copeland A."/>
            <person name="Lucas S."/>
            <person name="Lapidus A."/>
            <person name="Barry K."/>
            <person name="Detter J.C."/>
            <person name="Glavina T."/>
            <person name="Hammon N."/>
            <person name="Israni S."/>
            <person name="Pitluck S."/>
            <person name="Bryant D."/>
            <person name="Schmutz J."/>
            <person name="Larimer F."/>
            <person name="Land M."/>
            <person name="Kyrpides N."/>
            <person name="Ivanova N."/>
            <person name="Richardson P."/>
        </authorList>
    </citation>
    <scope>NUCLEOTIDE SEQUENCE [LARGE SCALE GENOMIC DNA]</scope>
    <source>
        <strain>CaD3</strain>
    </source>
</reference>
<sequence>MSLTQDQKVEIIKQFGTSEKDTGKSEVQVALYTRRISDLTSHLQEHPKDKHSRRGLLMLVAKRKKILNYLKNVDIERYRKVIGELELRK</sequence>
<gene>
    <name evidence="1" type="primary">rpsO</name>
    <name type="ordered locus">Cag_1458</name>
</gene>
<name>RS15_CHLCH</name>
<accession>Q3AQL1</accession>